<feature type="chain" id="PRO_0000369085" description="Non-structural protein 1">
    <location>
        <begin position="1"/>
        <end position="486"/>
    </location>
</feature>
<feature type="region of interest" description="RNA-binding" evidence="1">
    <location>
        <begin position="1"/>
        <end position="81"/>
    </location>
</feature>
<feature type="region of interest" description="Zinc-binding domain" evidence="1">
    <location>
        <begin position="42"/>
        <end position="79"/>
    </location>
</feature>
<feature type="region of interest" description="Important for cytoskeleton localization" evidence="1">
    <location>
        <begin position="82"/>
        <end position="176"/>
    </location>
</feature>
<feature type="region of interest" description="Interaction with host IRF3" evidence="1">
    <location>
        <begin position="317"/>
        <end position="486"/>
    </location>
</feature>
<feature type="short sequence motif" description="IKBKB-like degron (ILD) motif" evidence="1">
    <location>
        <begin position="479"/>
        <end position="483"/>
    </location>
</feature>
<feature type="short sequence motif" description="pLxIS motif" evidence="1">
    <location>
        <begin position="480"/>
        <end position="483"/>
    </location>
</feature>
<feature type="sequence conflict" description="In Ref. 1; BAA20541." ref="1">
    <original>D</original>
    <variation>G</variation>
    <location>
        <position position="449"/>
    </location>
</feature>
<sequence>MATFKDACYQYKKLNKLNNAVLKLGANDVWRPSTLTKCKGWCLDCCQYTDLTYCQGCLIYHVCEWCSQYSRCFLDDNPHLLRMRTFRNEITKDDLENLINMYNTLFPINQKIVHKFANIIKQHKCRNEYLTQRYNHFLMPITLQSLSIELDGDIYYIFGYYDDMHKINQTPFSFTNLISKYDILLLDSINFDRMAFLPLTLQQEYALRYFSKSRFITEKRKCIKISHFSDNILDNLHDPNFTLQVIRNCSNMSVEWNEACNLIRNINDYFDILKSSRTEFYDISPRCRMFTQYKLKIASKLIKPNYVASNHNSLATEVHNCKWCSINNNSIVWDDFRIKNVYNDIFNFIRALVKSNLYVGHCSSEEKIYESVKDVLNVCKENEWNILVTEMFNQLEPIKLNDNNYILLNYEINWNVMNVLINSIGKVPKILTLSDVILILRIIIYDWFDIRFMRNTPMTTFTVNKLKQLYEKDRPAEHDSGVSDVE</sequence>
<comment type="function">
    <text evidence="1">Plays a role in the inhibition of host innate immunity by inducing the degradation of key host factors required to activate interferon production such as IRF3, IRF5 or IRF7. Associates with components of cullin RING ligases (CRLs) including CUL1 or CUL3, which are essential multisubunit ubiquitination complexes, to modulate their activities. Recognizes the host NF-kappa-B regulator BTRC through the presence of a DSGXS motif in the C-terminal substrate recognition domain.</text>
</comment>
<comment type="subunit">
    <text evidence="1">Interacts (via C-terminus) with host IRF3; this interaction leads to IRF3 degradation. Interacts with host IRF7; this interaction leads to IRF7 degradation. Interacts with host CUL1 and CUL3. Interacts with host BTRC.</text>
</comment>
<comment type="subcellular location">
    <subcellularLocation>
        <location evidence="1">Host cytoplasm</location>
        <location evidence="1">Host cytoskeleton</location>
    </subcellularLocation>
</comment>
<comment type="domain">
    <text evidence="1">The integrity of the zinc-binding domain in NSP1 is important for degradation of host IRF3.</text>
</comment>
<comment type="domain">
    <text evidence="1">The pLxIS motif targets host IRF3 for degradation; however phosphorylation of NSP1 pLxIS motif is not required for its activity.</text>
</comment>
<comment type="PTM">
    <text evidence="1">The C-terminal region is phosphorylated by host CKII/CSNK2A1. Phosphorylation of the DSGXS motif is essential for host NF-kappa-B inhibition.</text>
</comment>
<comment type="similarity">
    <text evidence="1">Belongs to the rotavirus NSP1 family.</text>
</comment>
<organism>
    <name type="scientific">Rotavirus A (strain RVA/Human/Philippines/L26/1987/G12P1B[4])</name>
    <name type="common">RV-A</name>
    <dbReference type="NCBI Taxonomy" id="10953"/>
    <lineage>
        <taxon>Viruses</taxon>
        <taxon>Riboviria</taxon>
        <taxon>Orthornavirae</taxon>
        <taxon>Duplornaviricota</taxon>
        <taxon>Resentoviricetes</taxon>
        <taxon>Reovirales</taxon>
        <taxon>Sedoreoviridae</taxon>
        <taxon>Rotavirus</taxon>
        <taxon>Rotavirus A</taxon>
    </lineage>
</organism>
<name>NSP1_ROTHL</name>
<protein>
    <recommendedName>
        <fullName evidence="1">Non-structural protein 1</fullName>
        <shortName evidence="1">NSP1</shortName>
    </recommendedName>
    <alternativeName>
        <fullName evidence="1">NCVP2</fullName>
    </alternativeName>
    <alternativeName>
        <fullName evidence="1">Non-structural RNA-binding protein 53</fullName>
        <shortName evidence="1">NS53</shortName>
    </alternativeName>
</protein>
<organismHost>
    <name type="scientific">Homo sapiens</name>
    <name type="common">Human</name>
    <dbReference type="NCBI Taxonomy" id="9606"/>
</organismHost>
<reference key="1">
    <citation type="journal article" date="1996" name="Arch. Virol.">
        <title>Species-specific and interspecies relatedness of NSP1 sequences in human, porcine, bovine, feline, and equine rotavirus strains.</title>
        <authorList>
            <person name="Kojima K."/>
            <person name="Taniguchi K."/>
            <person name="Kobayashi N."/>
        </authorList>
    </citation>
    <scope>NUCLEOTIDE SEQUENCE [GENOMIC RNA]</scope>
</reference>
<reference key="2">
    <citation type="journal article" date="2008" name="J. Virol.">
        <title>Group A human rotavirus genomics: evidence that gene constellations are influenced by viral protein interactions.</title>
        <authorList>
            <person name="Heiman E.M."/>
            <person name="McDonald S.M."/>
            <person name="Barro M."/>
            <person name="Taraporewala Z.F."/>
            <person name="Bar-Magen T."/>
            <person name="Patton J.T."/>
        </authorList>
    </citation>
    <scope>NUCLEOTIDE SEQUENCE [GENOMIC RNA]</scope>
</reference>
<keyword id="KW-1035">Host cytoplasm</keyword>
<keyword id="KW-1037">Host cytoskeleton</keyword>
<keyword id="KW-0945">Host-virus interaction</keyword>
<keyword id="KW-1090">Inhibition of host innate immune response by virus</keyword>
<keyword id="KW-1092">Inhibition of host IRF3 by virus</keyword>
<keyword id="KW-1093">Inhibition of host IRF7 by virus</keyword>
<keyword id="KW-1100">Inhibition of host NF-kappa-B by virus</keyword>
<keyword id="KW-1113">Inhibition of host RLR pathway by virus</keyword>
<keyword id="KW-0922">Interferon antiviral system evasion</keyword>
<keyword id="KW-0479">Metal-binding</keyword>
<keyword id="KW-0597">Phosphoprotein</keyword>
<keyword id="KW-0694">RNA-binding</keyword>
<keyword id="KW-0899">Viral immunoevasion</keyword>
<evidence type="ECO:0000255" key="1">
    <source>
        <dbReference type="HAMAP-Rule" id="MF_04088"/>
    </source>
</evidence>
<accession>B3SRU4</accession>
<accession>O40625</accession>
<proteinExistence type="inferred from homology"/>
<dbReference type="EMBL" id="D38150">
    <property type="protein sequence ID" value="BAA20541.1"/>
    <property type="molecule type" value="Genomic_RNA"/>
</dbReference>
<dbReference type="EMBL" id="EF672592">
    <property type="protein sequence ID" value="ABV53269.1"/>
    <property type="molecule type" value="Genomic_RNA"/>
</dbReference>
<dbReference type="Proteomes" id="UP000001459">
    <property type="component" value="Genome"/>
</dbReference>
<dbReference type="GO" id="GO:0030430">
    <property type="term" value="C:host cell cytoplasm"/>
    <property type="evidence" value="ECO:0007669"/>
    <property type="project" value="UniProtKB-UniRule"/>
</dbReference>
<dbReference type="GO" id="GO:0044163">
    <property type="term" value="C:host cytoskeleton"/>
    <property type="evidence" value="ECO:0007669"/>
    <property type="project" value="UniProtKB-SubCell"/>
</dbReference>
<dbReference type="GO" id="GO:0046872">
    <property type="term" value="F:metal ion binding"/>
    <property type="evidence" value="ECO:0007669"/>
    <property type="project" value="UniProtKB-UniRule"/>
</dbReference>
<dbReference type="GO" id="GO:0003723">
    <property type="term" value="F:RNA binding"/>
    <property type="evidence" value="ECO:0007669"/>
    <property type="project" value="UniProtKB-UniRule"/>
</dbReference>
<dbReference type="GO" id="GO:0039548">
    <property type="term" value="P:symbiont-mediated suppression of host cytoplasmic pattern recognition receptor signaling pathway via inhibition of IRF3 activity"/>
    <property type="evidence" value="ECO:0007669"/>
    <property type="project" value="UniProtKB-UniRule"/>
</dbReference>
<dbReference type="GO" id="GO:0039557">
    <property type="term" value="P:symbiont-mediated suppression of host cytoplasmic pattern recognition receptor signaling pathway via inhibition of IRF7 activity"/>
    <property type="evidence" value="ECO:0007669"/>
    <property type="project" value="UniProtKB-UniRule"/>
</dbReference>
<dbReference type="GO" id="GO:0085034">
    <property type="term" value="P:symbiont-mediated suppression of host NF-kappaB cascade"/>
    <property type="evidence" value="ECO:0007669"/>
    <property type="project" value="UniProtKB-UniRule"/>
</dbReference>
<dbReference type="HAMAP" id="MF_04088">
    <property type="entry name" value="ROTA_NSP1"/>
    <property type="match status" value="1"/>
</dbReference>
<dbReference type="InterPro" id="IPR002148">
    <property type="entry name" value="Rotavirus_NSP1"/>
</dbReference>
<dbReference type="Pfam" id="PF00981">
    <property type="entry name" value="Rota_NS53"/>
    <property type="match status" value="1"/>
</dbReference>